<name>UBIG_ECO57</name>
<comment type="function">
    <text evidence="1">O-methyltransferase that catalyzes the 2 O-methylation steps in the ubiquinone biosynthetic pathway.</text>
</comment>
<comment type="catalytic activity">
    <reaction evidence="1">
        <text>a 3-demethylubiquinol + S-adenosyl-L-methionine = a ubiquinol + S-adenosyl-L-homocysteine + H(+)</text>
        <dbReference type="Rhea" id="RHEA:44380"/>
        <dbReference type="Rhea" id="RHEA-COMP:9566"/>
        <dbReference type="Rhea" id="RHEA-COMP:10914"/>
        <dbReference type="ChEBI" id="CHEBI:15378"/>
        <dbReference type="ChEBI" id="CHEBI:17976"/>
        <dbReference type="ChEBI" id="CHEBI:57856"/>
        <dbReference type="ChEBI" id="CHEBI:59789"/>
        <dbReference type="ChEBI" id="CHEBI:84422"/>
        <dbReference type="EC" id="2.1.1.64"/>
    </reaction>
</comment>
<comment type="catalytic activity">
    <reaction evidence="1">
        <text>a 3-(all-trans-polyprenyl)benzene-1,2-diol + S-adenosyl-L-methionine = a 2-methoxy-6-(all-trans-polyprenyl)phenol + S-adenosyl-L-homocysteine + H(+)</text>
        <dbReference type="Rhea" id="RHEA:31411"/>
        <dbReference type="Rhea" id="RHEA-COMP:9550"/>
        <dbReference type="Rhea" id="RHEA-COMP:9551"/>
        <dbReference type="ChEBI" id="CHEBI:15378"/>
        <dbReference type="ChEBI" id="CHEBI:57856"/>
        <dbReference type="ChEBI" id="CHEBI:59789"/>
        <dbReference type="ChEBI" id="CHEBI:62729"/>
        <dbReference type="ChEBI" id="CHEBI:62731"/>
        <dbReference type="EC" id="2.1.1.222"/>
    </reaction>
</comment>
<comment type="pathway">
    <text evidence="1">Cofactor biosynthesis; ubiquinone biosynthesis.</text>
</comment>
<comment type="similarity">
    <text evidence="1">Belongs to the methyltransferase superfamily. UbiG/COQ3 family.</text>
</comment>
<proteinExistence type="inferred from homology"/>
<evidence type="ECO:0000255" key="1">
    <source>
        <dbReference type="HAMAP-Rule" id="MF_00472"/>
    </source>
</evidence>
<gene>
    <name evidence="1" type="primary">ubiG</name>
    <name type="ordered locus">Z3486</name>
    <name type="ordered locus">ECs3115</name>
</gene>
<reference key="1">
    <citation type="journal article" date="2001" name="Nature">
        <title>Genome sequence of enterohaemorrhagic Escherichia coli O157:H7.</title>
        <authorList>
            <person name="Perna N.T."/>
            <person name="Plunkett G. III"/>
            <person name="Burland V."/>
            <person name="Mau B."/>
            <person name="Glasner J.D."/>
            <person name="Rose D.J."/>
            <person name="Mayhew G.F."/>
            <person name="Evans P.S."/>
            <person name="Gregor J."/>
            <person name="Kirkpatrick H.A."/>
            <person name="Posfai G."/>
            <person name="Hackett J."/>
            <person name="Klink S."/>
            <person name="Boutin A."/>
            <person name="Shao Y."/>
            <person name="Miller L."/>
            <person name="Grotbeck E.J."/>
            <person name="Davis N.W."/>
            <person name="Lim A."/>
            <person name="Dimalanta E.T."/>
            <person name="Potamousis K."/>
            <person name="Apodaca J."/>
            <person name="Anantharaman T.S."/>
            <person name="Lin J."/>
            <person name="Yen G."/>
            <person name="Schwartz D.C."/>
            <person name="Welch R.A."/>
            <person name="Blattner F.R."/>
        </authorList>
    </citation>
    <scope>NUCLEOTIDE SEQUENCE [LARGE SCALE GENOMIC DNA]</scope>
    <source>
        <strain>O157:H7 / EDL933 / ATCC 700927 / EHEC</strain>
    </source>
</reference>
<reference key="2">
    <citation type="journal article" date="2001" name="DNA Res.">
        <title>Complete genome sequence of enterohemorrhagic Escherichia coli O157:H7 and genomic comparison with a laboratory strain K-12.</title>
        <authorList>
            <person name="Hayashi T."/>
            <person name="Makino K."/>
            <person name="Ohnishi M."/>
            <person name="Kurokawa K."/>
            <person name="Ishii K."/>
            <person name="Yokoyama K."/>
            <person name="Han C.-G."/>
            <person name="Ohtsubo E."/>
            <person name="Nakayama K."/>
            <person name="Murata T."/>
            <person name="Tanaka M."/>
            <person name="Tobe T."/>
            <person name="Iida T."/>
            <person name="Takami H."/>
            <person name="Honda T."/>
            <person name="Sasakawa C."/>
            <person name="Ogasawara N."/>
            <person name="Yasunaga T."/>
            <person name="Kuhara S."/>
            <person name="Shiba T."/>
            <person name="Hattori M."/>
            <person name="Shinagawa H."/>
        </authorList>
    </citation>
    <scope>NUCLEOTIDE SEQUENCE [LARGE SCALE GENOMIC DNA]</scope>
    <source>
        <strain>O157:H7 / Sakai / RIMD 0509952 / EHEC</strain>
    </source>
</reference>
<feature type="chain" id="PRO_0000193381" description="Ubiquinone biosynthesis O-methyltransferase">
    <location>
        <begin position="1"/>
        <end position="240"/>
    </location>
</feature>
<feature type="binding site" evidence="1">
    <location>
        <position position="44"/>
    </location>
    <ligand>
        <name>S-adenosyl-L-methionine</name>
        <dbReference type="ChEBI" id="CHEBI:59789"/>
    </ligand>
</feature>
<feature type="binding site" evidence="1">
    <location>
        <position position="64"/>
    </location>
    <ligand>
        <name>S-adenosyl-L-methionine</name>
        <dbReference type="ChEBI" id="CHEBI:59789"/>
    </ligand>
</feature>
<feature type="binding site" evidence="1">
    <location>
        <position position="85"/>
    </location>
    <ligand>
        <name>S-adenosyl-L-methionine</name>
        <dbReference type="ChEBI" id="CHEBI:59789"/>
    </ligand>
</feature>
<feature type="binding site" evidence="1">
    <location>
        <position position="129"/>
    </location>
    <ligand>
        <name>S-adenosyl-L-methionine</name>
        <dbReference type="ChEBI" id="CHEBI:59789"/>
    </ligand>
</feature>
<accession>Q8XE29</accession>
<keyword id="KW-0489">Methyltransferase</keyword>
<keyword id="KW-1185">Reference proteome</keyword>
<keyword id="KW-0949">S-adenosyl-L-methionine</keyword>
<keyword id="KW-0808">Transferase</keyword>
<keyword id="KW-0831">Ubiquinone biosynthesis</keyword>
<protein>
    <recommendedName>
        <fullName evidence="1">Ubiquinone biosynthesis O-methyltransferase</fullName>
    </recommendedName>
    <alternativeName>
        <fullName evidence="1">2-octaprenyl-6-hydroxyphenol methylase</fullName>
        <ecNumber evidence="1">2.1.1.222</ecNumber>
    </alternativeName>
    <alternativeName>
        <fullName evidence="1">3-demethylubiquinone-8 3-O-methyltransferase</fullName>
        <ecNumber evidence="1">2.1.1.64</ecNumber>
    </alternativeName>
</protein>
<dbReference type="EC" id="2.1.1.222" evidence="1"/>
<dbReference type="EC" id="2.1.1.64" evidence="1"/>
<dbReference type="EMBL" id="AE005174">
    <property type="protein sequence ID" value="AAG57361.1"/>
    <property type="molecule type" value="Genomic_DNA"/>
</dbReference>
<dbReference type="EMBL" id="BA000007">
    <property type="protein sequence ID" value="BAB36538.1"/>
    <property type="molecule type" value="Genomic_DNA"/>
</dbReference>
<dbReference type="PIR" id="C91018">
    <property type="entry name" value="C91018"/>
</dbReference>
<dbReference type="PIR" id="E85862">
    <property type="entry name" value="E85862"/>
</dbReference>
<dbReference type="RefSeq" id="NP_311142.1">
    <property type="nucleotide sequence ID" value="NC_002695.1"/>
</dbReference>
<dbReference type="RefSeq" id="WP_000990779.1">
    <property type="nucleotide sequence ID" value="NZ_VOAI01000001.1"/>
</dbReference>
<dbReference type="SMR" id="Q8XE29"/>
<dbReference type="STRING" id="155864.Z3486"/>
<dbReference type="GeneID" id="916823"/>
<dbReference type="KEGG" id="ece:Z3486"/>
<dbReference type="KEGG" id="ecs:ECs_3115"/>
<dbReference type="PATRIC" id="fig|386585.9.peg.3249"/>
<dbReference type="eggNOG" id="COG2227">
    <property type="taxonomic scope" value="Bacteria"/>
</dbReference>
<dbReference type="HOGENOM" id="CLU_042432_5_0_6"/>
<dbReference type="OMA" id="LASRWWD"/>
<dbReference type="UniPathway" id="UPA00232"/>
<dbReference type="Proteomes" id="UP000000558">
    <property type="component" value="Chromosome"/>
</dbReference>
<dbReference type="Proteomes" id="UP000002519">
    <property type="component" value="Chromosome"/>
</dbReference>
<dbReference type="GO" id="GO:0102208">
    <property type="term" value="F:2-polyprenyl-6-hydroxyphenol methylase activity"/>
    <property type="evidence" value="ECO:0007669"/>
    <property type="project" value="UniProtKB-EC"/>
</dbReference>
<dbReference type="GO" id="GO:0061542">
    <property type="term" value="F:3-demethylubiquinol 3-O-methyltransferase activity"/>
    <property type="evidence" value="ECO:0007669"/>
    <property type="project" value="UniProtKB-UniRule"/>
</dbReference>
<dbReference type="GO" id="GO:0010420">
    <property type="term" value="F:polyprenyldihydroxybenzoate methyltransferase activity"/>
    <property type="evidence" value="ECO:0007669"/>
    <property type="project" value="InterPro"/>
</dbReference>
<dbReference type="GO" id="GO:0032259">
    <property type="term" value="P:methylation"/>
    <property type="evidence" value="ECO:0007669"/>
    <property type="project" value="UniProtKB-KW"/>
</dbReference>
<dbReference type="CDD" id="cd02440">
    <property type="entry name" value="AdoMet_MTases"/>
    <property type="match status" value="1"/>
</dbReference>
<dbReference type="FunFam" id="3.40.50.150:FF:000028">
    <property type="entry name" value="Ubiquinone biosynthesis O-methyltransferase"/>
    <property type="match status" value="1"/>
</dbReference>
<dbReference type="Gene3D" id="3.40.50.150">
    <property type="entry name" value="Vaccinia Virus protein VP39"/>
    <property type="match status" value="1"/>
</dbReference>
<dbReference type="HAMAP" id="MF_00472">
    <property type="entry name" value="UbiG"/>
    <property type="match status" value="1"/>
</dbReference>
<dbReference type="InterPro" id="IPR029063">
    <property type="entry name" value="SAM-dependent_MTases_sf"/>
</dbReference>
<dbReference type="InterPro" id="IPR010233">
    <property type="entry name" value="UbiG_MeTrfase"/>
</dbReference>
<dbReference type="NCBIfam" id="TIGR01983">
    <property type="entry name" value="UbiG"/>
    <property type="match status" value="1"/>
</dbReference>
<dbReference type="PANTHER" id="PTHR43464">
    <property type="entry name" value="METHYLTRANSFERASE"/>
    <property type="match status" value="1"/>
</dbReference>
<dbReference type="PANTHER" id="PTHR43464:SF19">
    <property type="entry name" value="UBIQUINONE BIOSYNTHESIS O-METHYLTRANSFERASE, MITOCHONDRIAL"/>
    <property type="match status" value="1"/>
</dbReference>
<dbReference type="Pfam" id="PF13489">
    <property type="entry name" value="Methyltransf_23"/>
    <property type="match status" value="1"/>
</dbReference>
<dbReference type="SUPFAM" id="SSF53335">
    <property type="entry name" value="S-adenosyl-L-methionine-dependent methyltransferases"/>
    <property type="match status" value="1"/>
</dbReference>
<organism>
    <name type="scientific">Escherichia coli O157:H7</name>
    <dbReference type="NCBI Taxonomy" id="83334"/>
    <lineage>
        <taxon>Bacteria</taxon>
        <taxon>Pseudomonadati</taxon>
        <taxon>Pseudomonadota</taxon>
        <taxon>Gammaproteobacteria</taxon>
        <taxon>Enterobacterales</taxon>
        <taxon>Enterobacteriaceae</taxon>
        <taxon>Escherichia</taxon>
    </lineage>
</organism>
<sequence length="240" mass="26585">MNAEKSPVNHNVDHEEIAKFEAVASRWWDLEGEFKPLHRINPLRLSYIAERAGGLFGKKVLDVGCGGGILAESMAREGATVTGLDMGFEPLQVAKLHALESGIQVDYVQETVEEHAAKHAGQYDVVTCMEMLEHVPDPQSVVRACAQLVKPGGDVFFSTLNRNGKSWLMAVVGAEYILRMVPKGTHDVKKFIKPAELLGWVDQTSLKERHITGLHYNPITNTFKLGPGVDVNYMLHTQNK</sequence>